<accession>Q0TCM3</accession>
<protein>
    <recommendedName>
        <fullName evidence="1">Protein AaeX</fullName>
    </recommendedName>
</protein>
<feature type="chain" id="PRO_0000300575" description="Protein AaeX">
    <location>
        <begin position="1"/>
        <end position="67"/>
    </location>
</feature>
<feature type="transmembrane region" description="Helical" evidence="1">
    <location>
        <begin position="3"/>
        <end position="23"/>
    </location>
</feature>
<feature type="transmembrane region" description="Helical" evidence="1">
    <location>
        <begin position="43"/>
        <end position="63"/>
    </location>
</feature>
<keyword id="KW-1003">Cell membrane</keyword>
<keyword id="KW-0472">Membrane</keyword>
<keyword id="KW-0812">Transmembrane</keyword>
<keyword id="KW-1133">Transmembrane helix</keyword>
<organism>
    <name type="scientific">Escherichia coli O6:K15:H31 (strain 536 / UPEC)</name>
    <dbReference type="NCBI Taxonomy" id="362663"/>
    <lineage>
        <taxon>Bacteria</taxon>
        <taxon>Pseudomonadati</taxon>
        <taxon>Pseudomonadota</taxon>
        <taxon>Gammaproteobacteria</taxon>
        <taxon>Enterobacterales</taxon>
        <taxon>Enterobacteriaceae</taxon>
        <taxon>Escherichia</taxon>
    </lineage>
</organism>
<proteinExistence type="inferred from homology"/>
<reference key="1">
    <citation type="journal article" date="2006" name="Mol. Microbiol.">
        <title>Role of pathogenicity island-associated integrases in the genome plasticity of uropathogenic Escherichia coli strain 536.</title>
        <authorList>
            <person name="Hochhut B."/>
            <person name="Wilde C."/>
            <person name="Balling G."/>
            <person name="Middendorf B."/>
            <person name="Dobrindt U."/>
            <person name="Brzuszkiewicz E."/>
            <person name="Gottschalk G."/>
            <person name="Carniel E."/>
            <person name="Hacker J."/>
        </authorList>
    </citation>
    <scope>NUCLEOTIDE SEQUENCE [LARGE SCALE GENOMIC DNA]</scope>
    <source>
        <strain>536 / UPEC</strain>
    </source>
</reference>
<comment type="subcellular location">
    <subcellularLocation>
        <location evidence="1">Cell membrane</location>
        <topology evidence="1">Multi-pass membrane protein</topology>
    </subcellularLocation>
</comment>
<comment type="induction">
    <text evidence="1">Positively coregulated with aaeA and aaeB by AaeR.</text>
</comment>
<comment type="similarity">
    <text evidence="1">Belongs to the AaeX family.</text>
</comment>
<evidence type="ECO:0000255" key="1">
    <source>
        <dbReference type="HAMAP-Rule" id="MF_01546"/>
    </source>
</evidence>
<dbReference type="EMBL" id="CP000247">
    <property type="protein sequence ID" value="ABG71306.1"/>
    <property type="molecule type" value="Genomic_DNA"/>
</dbReference>
<dbReference type="RefSeq" id="WP_000051841.1">
    <property type="nucleotide sequence ID" value="NC_008253.1"/>
</dbReference>
<dbReference type="GeneID" id="93778743"/>
<dbReference type="KEGG" id="ecp:ECP_3326"/>
<dbReference type="HOGENOM" id="CLU_188292_0_0_6"/>
<dbReference type="Proteomes" id="UP000009182">
    <property type="component" value="Chromosome"/>
</dbReference>
<dbReference type="GO" id="GO:0005886">
    <property type="term" value="C:plasma membrane"/>
    <property type="evidence" value="ECO:0007669"/>
    <property type="project" value="UniProtKB-SubCell"/>
</dbReference>
<dbReference type="HAMAP" id="MF_01546">
    <property type="entry name" value="AaeX"/>
    <property type="match status" value="1"/>
</dbReference>
<dbReference type="InterPro" id="IPR012451">
    <property type="entry name" value="DUF1656"/>
</dbReference>
<dbReference type="NCBIfam" id="NF008615">
    <property type="entry name" value="PRK11594.1"/>
    <property type="match status" value="1"/>
</dbReference>
<dbReference type="Pfam" id="PF07869">
    <property type="entry name" value="DUF1656"/>
    <property type="match status" value="1"/>
</dbReference>
<sequence>MSLFPVIVVFGLSFPPIFFELLLSLAIFWLVRRVLVPTGIYDFVWHPALFNTALYCCLFYLISRLFV</sequence>
<gene>
    <name evidence="1" type="primary">aaeX</name>
    <name type="ordered locus">ECP_3326</name>
</gene>
<name>AAEX_ECOL5</name>